<evidence type="ECO:0000250" key="1">
    <source>
        <dbReference type="UniProtKB" id="C0HK84"/>
    </source>
</evidence>
<evidence type="ECO:0000269" key="2">
    <source>
    </source>
</evidence>
<evidence type="ECO:0000303" key="3">
    <source>
    </source>
</evidence>
<evidence type="ECO:0000305" key="4"/>
<evidence type="ECO:0000305" key="5">
    <source>
    </source>
</evidence>
<comment type="function">
    <text evidence="1">Antimicrobial peptide.</text>
</comment>
<comment type="subcellular location">
    <subcellularLocation>
        <location evidence="2">Secreted</location>
    </subcellularLocation>
</comment>
<comment type="tissue specificity">
    <text evidence="5">Expressed by the skin glands.</text>
</comment>
<comment type="mass spectrometry"/>
<comment type="similarity">
    <text evidence="4">Belongs to the gastrin/cholecystokinin family. Magainin subfamily.</text>
</comment>
<organism evidence="3">
    <name type="scientific">Xenopus ruwenzoriensis</name>
    <name type="common">Uganda clawed frog</name>
    <dbReference type="NCBI Taxonomy" id="105430"/>
    <lineage>
        <taxon>Eukaryota</taxon>
        <taxon>Metazoa</taxon>
        <taxon>Chordata</taxon>
        <taxon>Craniata</taxon>
        <taxon>Vertebrata</taxon>
        <taxon>Euteleostomi</taxon>
        <taxon>Amphibia</taxon>
        <taxon>Batrachia</taxon>
        <taxon>Anura</taxon>
        <taxon>Pipoidea</taxon>
        <taxon>Pipidae</taxon>
        <taxon>Xenopodinae</taxon>
        <taxon>Xenopus</taxon>
        <taxon>Xenopus</taxon>
    </lineage>
</organism>
<protein>
    <recommendedName>
        <fullName evidence="3">Magainin-R1</fullName>
    </recommendedName>
</protein>
<dbReference type="GO" id="GO:0005576">
    <property type="term" value="C:extracellular region"/>
    <property type="evidence" value="ECO:0007669"/>
    <property type="project" value="UniProtKB-SubCell"/>
</dbReference>
<dbReference type="GO" id="GO:0006952">
    <property type="term" value="P:defense response"/>
    <property type="evidence" value="ECO:0007669"/>
    <property type="project" value="UniProtKB-KW"/>
</dbReference>
<name>MAGR1_XENRU</name>
<feature type="peptide" id="PRO_0000440923" description="Magainin-R1" evidence="2">
    <location>
        <begin position="1"/>
        <end position="23"/>
    </location>
</feature>
<reference evidence="4" key="1">
    <citation type="journal article" date="2016" name="Comp. Biochem. Physiol.">
        <title>Peptidomic analysis of the extensive array of host-defense peptides in skin secretions of the dodecaploid frog Xenopus ruwenzoriensis (Pipidae).</title>
        <authorList>
            <person name="Coquet L."/>
            <person name="Kolodziejek J."/>
            <person name="Jouenne T."/>
            <person name="Nowotny N."/>
            <person name="King J.D."/>
            <person name="Conlon J.M."/>
        </authorList>
    </citation>
    <scope>PROTEIN SEQUENCE</scope>
    <scope>SUBCELLULAR LOCATION</scope>
    <scope>MASS SPECTROMETRY</scope>
    <source>
        <tissue evidence="3">Skin secretion</tissue>
    </source>
</reference>
<keyword id="KW-0878">Amphibian defense peptide</keyword>
<keyword id="KW-0929">Antimicrobial</keyword>
<keyword id="KW-0903">Direct protein sequencing</keyword>
<keyword id="KW-0964">Secreted</keyword>
<accession>C0HKN6</accession>
<sequence>GIGKFLHSAKKFGKAFVGEIMNS</sequence>
<proteinExistence type="evidence at protein level"/>